<reference key="1">
    <citation type="submission" date="2009-09" db="EMBL/GenBank/DDBJ databases">
        <title>Polymorphism of cytochrome P450 of drug resistant form of Mycobacterium tuberculosis.</title>
        <authorList>
            <person name="Vasilevskaya A.V."/>
            <person name="Alyapkina Y.S."/>
            <person name="Usanov S.A."/>
        </authorList>
    </citation>
    <scope>NUCLEOTIDE SEQUENCE [GENOMIC DNA]</scope>
</reference>
<reference key="2">
    <citation type="journal article" date="1998" name="Nature">
        <title>Deciphering the biology of Mycobacterium tuberculosis from the complete genome sequence.</title>
        <authorList>
            <person name="Cole S.T."/>
            <person name="Brosch R."/>
            <person name="Parkhill J."/>
            <person name="Garnier T."/>
            <person name="Churcher C.M."/>
            <person name="Harris D.E."/>
            <person name="Gordon S.V."/>
            <person name="Eiglmeier K."/>
            <person name="Gas S."/>
            <person name="Barry C.E. III"/>
            <person name="Tekaia F."/>
            <person name="Badcock K."/>
            <person name="Basham D."/>
            <person name="Brown D."/>
            <person name="Chillingworth T."/>
            <person name="Connor R."/>
            <person name="Davies R.M."/>
            <person name="Devlin K."/>
            <person name="Feltwell T."/>
            <person name="Gentles S."/>
            <person name="Hamlin N."/>
            <person name="Holroyd S."/>
            <person name="Hornsby T."/>
            <person name="Jagels K."/>
            <person name="Krogh A."/>
            <person name="McLean J."/>
            <person name="Moule S."/>
            <person name="Murphy L.D."/>
            <person name="Oliver S."/>
            <person name="Osborne J."/>
            <person name="Quail M.A."/>
            <person name="Rajandream M.A."/>
            <person name="Rogers J."/>
            <person name="Rutter S."/>
            <person name="Seeger K."/>
            <person name="Skelton S."/>
            <person name="Squares S."/>
            <person name="Squares R."/>
            <person name="Sulston J.E."/>
            <person name="Taylor K."/>
            <person name="Whitehead S."/>
            <person name="Barrell B.G."/>
        </authorList>
    </citation>
    <scope>NUCLEOTIDE SEQUENCE [LARGE SCALE GENOMIC DNA]</scope>
    <source>
        <strain>ATCC 25618 / H37Rv</strain>
    </source>
</reference>
<reference key="3">
    <citation type="journal article" date="2011" name="Mol. Cell. Proteomics">
        <title>Proteogenomic analysis of Mycobacterium tuberculosis by high resolution mass spectrometry.</title>
        <authorList>
            <person name="Kelkar D.S."/>
            <person name="Kumar D."/>
            <person name="Kumar P."/>
            <person name="Balakrishnan L."/>
            <person name="Muthusamy B."/>
            <person name="Yadav A.K."/>
            <person name="Shrivastava P."/>
            <person name="Marimuthu A."/>
            <person name="Anand S."/>
            <person name="Sundaram H."/>
            <person name="Kingsbury R."/>
            <person name="Harsha H.C."/>
            <person name="Nair B."/>
            <person name="Prasad T.S."/>
            <person name="Chauhan D.S."/>
            <person name="Katoch K."/>
            <person name="Katoch V.M."/>
            <person name="Kumar P."/>
            <person name="Chaerkady R."/>
            <person name="Ramachandran S."/>
            <person name="Dash D."/>
            <person name="Pandey A."/>
        </authorList>
    </citation>
    <scope>IDENTIFICATION BY MASS SPECTROMETRY [LARGE SCALE ANALYSIS]</scope>
    <source>
        <strain>ATCC 25618 / H37Rv</strain>
    </source>
</reference>
<accession>P9WPM1</accession>
<accession>D0EW72</accession>
<accession>F2GKM3</accession>
<accession>O86330</accession>
<accession>P63719</accession>
<gene>
    <name type="primary">cyp139</name>
    <name type="ordered locus">Rv1666c</name>
    <name type="ORF">MTV047.02c</name>
</gene>
<dbReference type="EC" id="1.14.-.-"/>
<dbReference type="EMBL" id="GQ900520">
    <property type="protein sequence ID" value="ACX47919.1"/>
    <property type="molecule type" value="Genomic_DNA"/>
</dbReference>
<dbReference type="EMBL" id="AL123456">
    <property type="protein sequence ID" value="CCP44431.1"/>
    <property type="molecule type" value="Genomic_DNA"/>
</dbReference>
<dbReference type="PIR" id="D70985">
    <property type="entry name" value="D70985"/>
</dbReference>
<dbReference type="RefSeq" id="NP_216182.1">
    <property type="nucleotide sequence ID" value="NC_000962.3"/>
</dbReference>
<dbReference type="RefSeq" id="WP_003901231.1">
    <property type="nucleotide sequence ID" value="NZ_NVQJ01000010.1"/>
</dbReference>
<dbReference type="SMR" id="P9WPM1"/>
<dbReference type="FunCoup" id="P9WPM1">
    <property type="interactions" value="6"/>
</dbReference>
<dbReference type="STRING" id="83332.Rv1666c"/>
<dbReference type="PaxDb" id="83332-Rv1666c"/>
<dbReference type="DNASU" id="885528"/>
<dbReference type="GeneID" id="885528"/>
<dbReference type="KEGG" id="mtu:Rv1666c"/>
<dbReference type="KEGG" id="mtv:RVBD_1666c"/>
<dbReference type="PATRIC" id="fig|83332.111.peg.1852"/>
<dbReference type="TubercuList" id="Rv1666c"/>
<dbReference type="eggNOG" id="COG2124">
    <property type="taxonomic scope" value="Bacteria"/>
</dbReference>
<dbReference type="InParanoid" id="P9WPM1"/>
<dbReference type="OrthoDB" id="5290182at2"/>
<dbReference type="PhylomeDB" id="P9WPM1"/>
<dbReference type="Proteomes" id="UP000001584">
    <property type="component" value="Chromosome"/>
</dbReference>
<dbReference type="GO" id="GO:0009274">
    <property type="term" value="C:peptidoglycan-based cell wall"/>
    <property type="evidence" value="ECO:0007005"/>
    <property type="project" value="MTBBASE"/>
</dbReference>
<dbReference type="GO" id="GO:0020037">
    <property type="term" value="F:heme binding"/>
    <property type="evidence" value="ECO:0007669"/>
    <property type="project" value="InterPro"/>
</dbReference>
<dbReference type="GO" id="GO:0005506">
    <property type="term" value="F:iron ion binding"/>
    <property type="evidence" value="ECO:0007669"/>
    <property type="project" value="InterPro"/>
</dbReference>
<dbReference type="GO" id="GO:0004497">
    <property type="term" value="F:monooxygenase activity"/>
    <property type="evidence" value="ECO:0007669"/>
    <property type="project" value="UniProtKB-KW"/>
</dbReference>
<dbReference type="GO" id="GO:0016491">
    <property type="term" value="F:oxidoreductase activity"/>
    <property type="evidence" value="ECO:0000318"/>
    <property type="project" value="GO_Central"/>
</dbReference>
<dbReference type="GO" id="GO:0016705">
    <property type="term" value="F:oxidoreductase activity, acting on paired donors, with incorporation or reduction of molecular oxygen"/>
    <property type="evidence" value="ECO:0007669"/>
    <property type="project" value="InterPro"/>
</dbReference>
<dbReference type="CDD" id="cd11053">
    <property type="entry name" value="CYP110-like"/>
    <property type="match status" value="1"/>
</dbReference>
<dbReference type="Gene3D" id="1.10.630.10">
    <property type="entry name" value="Cytochrome P450"/>
    <property type="match status" value="1"/>
</dbReference>
<dbReference type="InterPro" id="IPR001128">
    <property type="entry name" value="Cyt_P450"/>
</dbReference>
<dbReference type="InterPro" id="IPR017972">
    <property type="entry name" value="Cyt_P450_CS"/>
</dbReference>
<dbReference type="InterPro" id="IPR002403">
    <property type="entry name" value="Cyt_P450_E_grp-IV"/>
</dbReference>
<dbReference type="InterPro" id="IPR036396">
    <property type="entry name" value="Cyt_P450_sf"/>
</dbReference>
<dbReference type="InterPro" id="IPR050121">
    <property type="entry name" value="Cytochrome_P450_monoxygenase"/>
</dbReference>
<dbReference type="PANTHER" id="PTHR24305">
    <property type="entry name" value="CYTOCHROME P450"/>
    <property type="match status" value="1"/>
</dbReference>
<dbReference type="PANTHER" id="PTHR24305:SF166">
    <property type="entry name" value="CYTOCHROME P450 12A4, MITOCHONDRIAL-RELATED"/>
    <property type="match status" value="1"/>
</dbReference>
<dbReference type="Pfam" id="PF00067">
    <property type="entry name" value="p450"/>
    <property type="match status" value="1"/>
</dbReference>
<dbReference type="PRINTS" id="PR00465">
    <property type="entry name" value="EP450IV"/>
</dbReference>
<dbReference type="PRINTS" id="PR00385">
    <property type="entry name" value="P450"/>
</dbReference>
<dbReference type="SUPFAM" id="SSF48264">
    <property type="entry name" value="Cytochrome P450"/>
    <property type="match status" value="1"/>
</dbReference>
<dbReference type="PROSITE" id="PS00086">
    <property type="entry name" value="CYTOCHROME_P450"/>
    <property type="match status" value="1"/>
</dbReference>
<comment type="cofactor">
    <cofactor evidence="1">
        <name>heme</name>
        <dbReference type="ChEBI" id="CHEBI:30413"/>
    </cofactor>
</comment>
<comment type="similarity">
    <text evidence="2">Belongs to the cytochrome P450 family.</text>
</comment>
<keyword id="KW-0349">Heme</keyword>
<keyword id="KW-0408">Iron</keyword>
<keyword id="KW-0479">Metal-binding</keyword>
<keyword id="KW-0503">Monooxygenase</keyword>
<keyword id="KW-0560">Oxidoreductase</keyword>
<keyword id="KW-1185">Reference proteome</keyword>
<proteinExistence type="evidence at protein level"/>
<organism>
    <name type="scientific">Mycobacterium tuberculosis (strain ATCC 25618 / H37Rv)</name>
    <dbReference type="NCBI Taxonomy" id="83332"/>
    <lineage>
        <taxon>Bacteria</taxon>
        <taxon>Bacillati</taxon>
        <taxon>Actinomycetota</taxon>
        <taxon>Actinomycetes</taxon>
        <taxon>Mycobacteriales</taxon>
        <taxon>Mycobacteriaceae</taxon>
        <taxon>Mycobacterium</taxon>
        <taxon>Mycobacterium tuberculosis complex</taxon>
    </lineage>
</organism>
<protein>
    <recommendedName>
        <fullName>Putative cytochrome P450 139</fullName>
        <ecNumber>1.14.-.-</ecNumber>
    </recommendedName>
</protein>
<sequence>MRYPLGEALLALYRWRGPLINAGVGGHGYTYLLGAEANRFVFANADAFSWSQTFESLVPVDGPTALIVSDGADHRRRRSVVAPGLRHHHVQRYVATMVSNIDTVIDGWQPGQRLDIYQELRSAVRRSTAESLFGQRLAVHSDFLGEQLQPLLDLTRRPPQVMRLQQRVNSPGWRRAMAARKRIDDLIDAQIADARTAPRPDDHMLTTLISGCSEEGTTLSDNEIRDSIVSLITAGYETTSGALAWAIYALLTVPGTWESAASEVARVLGGRVPAADDLSALTYLNGVVHETLRLYSPGVISARRVLRDLWFDGHRIRAGRLLIFSAYVTHRLPEIWPEPTEFRPLRWDPNAADYRKPAPHEFIPFSGGLHRCIGAVMATTEMTVILARLVARAMLQLPAQRTHRIRAANFAALRPWPGLTVEIRKSAPAQ</sequence>
<name>CP139_MYCTU</name>
<feature type="chain" id="PRO_0000052300" description="Putative cytochrome P450 139">
    <location>
        <begin position="1"/>
        <end position="430"/>
    </location>
</feature>
<feature type="binding site" description="axial binding residue" evidence="1">
    <location>
        <position position="372"/>
    </location>
    <ligand>
        <name>heme</name>
        <dbReference type="ChEBI" id="CHEBI:30413"/>
    </ligand>
    <ligandPart>
        <name>Fe</name>
        <dbReference type="ChEBI" id="CHEBI:18248"/>
    </ligandPart>
</feature>
<evidence type="ECO:0000250" key="1"/>
<evidence type="ECO:0000305" key="2"/>